<gene>
    <name type="primary">IAPP</name>
</gene>
<sequence length="89" mass="9832">MCLLKLPVVLIVLLVALHHLKATPIESNQVEKRKCNTATCATQRLANFLIRSSNNLGAILSPTNVGSNTYGKRSTVDILNREPLNYLPF</sequence>
<organism>
    <name type="scientific">Felis catus</name>
    <name type="common">Cat</name>
    <name type="synonym">Felis silvestris catus</name>
    <dbReference type="NCBI Taxonomy" id="9685"/>
    <lineage>
        <taxon>Eukaryota</taxon>
        <taxon>Metazoa</taxon>
        <taxon>Chordata</taxon>
        <taxon>Craniata</taxon>
        <taxon>Vertebrata</taxon>
        <taxon>Euteleostomi</taxon>
        <taxon>Mammalia</taxon>
        <taxon>Eutheria</taxon>
        <taxon>Laurasiatheria</taxon>
        <taxon>Carnivora</taxon>
        <taxon>Feliformia</taxon>
        <taxon>Felidae</taxon>
        <taxon>Felinae</taxon>
        <taxon>Felis</taxon>
    </lineage>
</organism>
<comment type="function">
    <text evidence="2 3">Amylin/IAPP is a glucoregulatory peptide hormone that plays an important role in the regulation of energy homeostasis (By similarity). Selectively inhibits insulin-stimulated glucose utilization and glycogen deposition in muscle, while not affecting adipocyte glucose metabolism. IAPP function is mediated by the CALCR-RAMPs (AMYRs) receptor complexes. Amylin can also bind CALCR receptor in the absence of RAMPs, although it is more selective for AMYRs (By similarity).</text>
</comment>
<comment type="subunit">
    <text evidence="2 3">Can form homodimers. Interacts with IDE and INS. Interaction with INS inhibits homodimerization and fibril formation (By similarity).</text>
</comment>
<comment type="subcellular location">
    <subcellularLocation>
        <location evidence="2">Secreted</location>
    </subcellularLocation>
</comment>
<comment type="domain">
    <text evidence="1">The mature protein is largely unstructured in the absence of a cognate ligand, and has a strong tendency to form fibrillar aggregates.</text>
</comment>
<comment type="similarity">
    <text evidence="5">Belongs to the calcitonin family.</text>
</comment>
<evidence type="ECO:0000250" key="1"/>
<evidence type="ECO:0000250" key="2">
    <source>
        <dbReference type="UniProtKB" id="P10997"/>
    </source>
</evidence>
<evidence type="ECO:0000250" key="3">
    <source>
        <dbReference type="UniProtKB" id="P12969"/>
    </source>
</evidence>
<evidence type="ECO:0000255" key="4"/>
<evidence type="ECO:0000305" key="5"/>
<feature type="signal peptide" evidence="4">
    <location>
        <begin position="1"/>
        <end position="22"/>
    </location>
</feature>
<feature type="propeptide" id="PRO_0000004102">
    <location>
        <begin position="23"/>
        <end position="31"/>
    </location>
</feature>
<feature type="peptide" id="PRO_0000004103" description="Islet amyloid polypeptide">
    <location>
        <begin position="34"/>
        <end position="70"/>
    </location>
</feature>
<feature type="propeptide" id="PRO_0000004104">
    <location>
        <begin position="74"/>
        <end position="89"/>
    </location>
</feature>
<feature type="modified residue" description="Tyrosine amide" evidence="1">
    <location>
        <position position="70"/>
    </location>
</feature>
<feature type="disulfide bond" evidence="3">
    <location>
        <begin position="35"/>
        <end position="40"/>
    </location>
</feature>
<proteinExistence type="evidence at protein level"/>
<name>IAPP_FELCA</name>
<accession>P12967</accession>
<protein>
    <recommendedName>
        <fullName>Islet amyloid polypeptide</fullName>
        <shortName>IAPP</shortName>
    </recommendedName>
    <alternativeName>
        <fullName>Amylin</fullName>
    </alternativeName>
</protein>
<keyword id="KW-0027">Amidation</keyword>
<keyword id="KW-0034">Amyloid</keyword>
<keyword id="KW-0165">Cleavage on pair of basic residues</keyword>
<keyword id="KW-0903">Direct protein sequencing</keyword>
<keyword id="KW-1015">Disulfide bond</keyword>
<keyword id="KW-0372">Hormone</keyword>
<keyword id="KW-1185">Reference proteome</keyword>
<keyword id="KW-0964">Secreted</keyword>
<keyword id="KW-0732">Signal</keyword>
<dbReference type="EMBL" id="M25388">
    <property type="protein sequence ID" value="AAA30813.1"/>
    <property type="molecule type" value="mRNA"/>
</dbReference>
<dbReference type="PIR" id="A33542">
    <property type="entry name" value="A33542"/>
</dbReference>
<dbReference type="RefSeq" id="NP_001036803.1">
    <property type="nucleotide sequence ID" value="NM_001043338.1"/>
</dbReference>
<dbReference type="RefSeq" id="XP_019689424.1">
    <property type="nucleotide sequence ID" value="XM_019833865.2"/>
</dbReference>
<dbReference type="RefSeq" id="XP_044916702.1">
    <property type="nucleotide sequence ID" value="XM_045060767.1"/>
</dbReference>
<dbReference type="STRING" id="9685.ENSFCAP00000020627"/>
<dbReference type="PaxDb" id="9685-ENSFCAP00000020627"/>
<dbReference type="Ensembl" id="ENSFCAT00000024980.3">
    <property type="protein sequence ID" value="ENSFCAP00000020627.3"/>
    <property type="gene ID" value="ENSFCAG00000029193.4"/>
</dbReference>
<dbReference type="GeneID" id="751513"/>
<dbReference type="KEGG" id="fca:751513"/>
<dbReference type="CTD" id="3375"/>
<dbReference type="VGNC" id="VGNC:84035">
    <property type="gene designation" value="IAPP"/>
</dbReference>
<dbReference type="eggNOG" id="ENOG502S4AQ">
    <property type="taxonomic scope" value="Eukaryota"/>
</dbReference>
<dbReference type="GeneTree" id="ENSGT00510000048671"/>
<dbReference type="HOGENOM" id="CLU_189304_0_0_1"/>
<dbReference type="InParanoid" id="P12967"/>
<dbReference type="OMA" id="CATQRLT"/>
<dbReference type="OrthoDB" id="9898100at2759"/>
<dbReference type="Proteomes" id="UP000011712">
    <property type="component" value="Chromosome B4"/>
</dbReference>
<dbReference type="Bgee" id="ENSFCAG00000029193">
    <property type="expression patterns" value="Expressed in adult mammalian kidney and 6 other cell types or tissues"/>
</dbReference>
<dbReference type="GO" id="GO:0005615">
    <property type="term" value="C:extracellular space"/>
    <property type="evidence" value="ECO:0000318"/>
    <property type="project" value="GO_Central"/>
</dbReference>
<dbReference type="GO" id="GO:0005179">
    <property type="term" value="F:hormone activity"/>
    <property type="evidence" value="ECO:0000250"/>
    <property type="project" value="UniProtKB"/>
</dbReference>
<dbReference type="GO" id="GO:0048018">
    <property type="term" value="F:receptor ligand activity"/>
    <property type="evidence" value="ECO:0000250"/>
    <property type="project" value="UniProtKB"/>
</dbReference>
<dbReference type="GO" id="GO:0097647">
    <property type="term" value="P:amylin receptor signaling pathway"/>
    <property type="evidence" value="ECO:0000250"/>
    <property type="project" value="UniProtKB"/>
</dbReference>
<dbReference type="Gene3D" id="6.10.250.2190">
    <property type="match status" value="1"/>
</dbReference>
<dbReference type="InterPro" id="IPR021117">
    <property type="entry name" value="Calcitonin-like"/>
</dbReference>
<dbReference type="InterPro" id="IPR021116">
    <property type="entry name" value="Calcitonin/adrenomedullin"/>
</dbReference>
<dbReference type="InterPro" id="IPR018360">
    <property type="entry name" value="Calcitonin_CS"/>
</dbReference>
<dbReference type="InterPro" id="IPR001693">
    <property type="entry name" value="Calcitonin_peptide-like"/>
</dbReference>
<dbReference type="InterPro" id="IPR000443">
    <property type="entry name" value="IAPP"/>
</dbReference>
<dbReference type="PANTHER" id="PTHR10505">
    <property type="entry name" value="CALCITONIN-RELATED"/>
    <property type="match status" value="1"/>
</dbReference>
<dbReference type="PANTHER" id="PTHR10505:SF4">
    <property type="entry name" value="ISLET AMYLOID POLYPEPTIDE"/>
    <property type="match status" value="1"/>
</dbReference>
<dbReference type="Pfam" id="PF00214">
    <property type="entry name" value="Calc_CGRP_IAPP"/>
    <property type="match status" value="1"/>
</dbReference>
<dbReference type="PRINTS" id="PR00818">
    <property type="entry name" value="ISLETAMYLOID"/>
</dbReference>
<dbReference type="SMART" id="SM00113">
    <property type="entry name" value="CALCITONIN"/>
    <property type="match status" value="1"/>
</dbReference>
<dbReference type="PROSITE" id="PS00258">
    <property type="entry name" value="CALCITONIN"/>
    <property type="match status" value="1"/>
</dbReference>
<reference key="1">
    <citation type="journal article" date="1989" name="Proc. Natl. Acad. Sci. U.S.A.">
        <title>Conservation of the sequence of islet amyloid polypeptide in five mammals is consistent with its putative role as an islet hormone.</title>
        <authorList>
            <person name="Nishi M."/>
            <person name="Chan S.J."/>
            <person name="Nagamatsu S."/>
            <person name="Bell G.I."/>
            <person name="Steiner D.F."/>
        </authorList>
    </citation>
    <scope>NUCLEOTIDE SEQUENCE [MRNA]</scope>
</reference>
<reference key="2">
    <citation type="journal article" date="1987" name="Proc. Natl. Acad. Sci. U.S.A.">
        <title>Amyloid fibrils in human insulinoma and islets of Langerhans of the diabetic cat are derived from a neuropeptide-like protein also present in normal islet cells.</title>
        <authorList>
            <person name="Westermark P."/>
            <person name="Wernstedt C."/>
            <person name="Wilander E."/>
            <person name="Hayden D.W."/>
            <person name="O'Brien T.D."/>
            <person name="Johnson K.H."/>
        </authorList>
    </citation>
    <scope>PROTEIN SEQUENCE OF 34-60</scope>
</reference>
<reference key="3">
    <citation type="journal article" date="1990" name="Diabetes">
        <title>Structure of cat islet amyloid polypeptide and identification of amino acid residues of potential significance for islet amyloid formation.</title>
        <authorList>
            <person name="Betsholtz C."/>
            <person name="Christmanson L."/>
            <person name="Engstrom U."/>
            <person name="Rorsman F."/>
            <person name="Jordan K."/>
            <person name="O'Brien T.D."/>
            <person name="Murtaugh M."/>
            <person name="Johnson K.H."/>
            <person name="Westermark P."/>
        </authorList>
    </citation>
    <scope>NUCLEOTIDE SEQUENCE [MRNA] OF 34-70</scope>
</reference>